<sequence length="160" mass="17495">MTARHPKLPHVYLKPGEFHFATKPTVVTTVLGSCVSVTMFDVFSRTAAICHALLPDGPRDDVFRYVDSSIIRMLEMFMSRGITPRQLQVKLFGGSDMLGATASRPGVGSRNVDIARQVLAAEGLEVAAADVGGTRGRKLFFYTHTGEVLLKRLNRTEADS</sequence>
<feature type="chain" id="PRO_0000251036" description="Probable chemoreceptor glutamine deamidase CheD 2">
    <location>
        <begin position="1"/>
        <end position="160"/>
    </location>
</feature>
<name>CHED2_GEOSL</name>
<comment type="function">
    <text evidence="1">Probably deamidates glutamine residues to glutamate on methyl-accepting chemotaxis receptors (MCPs), playing an important role in chemotaxis.</text>
</comment>
<comment type="catalytic activity">
    <reaction evidence="1">
        <text>L-glutaminyl-[protein] + H2O = L-glutamyl-[protein] + NH4(+)</text>
        <dbReference type="Rhea" id="RHEA:16441"/>
        <dbReference type="Rhea" id="RHEA-COMP:10207"/>
        <dbReference type="Rhea" id="RHEA-COMP:10208"/>
        <dbReference type="ChEBI" id="CHEBI:15377"/>
        <dbReference type="ChEBI" id="CHEBI:28938"/>
        <dbReference type="ChEBI" id="CHEBI:29973"/>
        <dbReference type="ChEBI" id="CHEBI:30011"/>
        <dbReference type="EC" id="3.5.1.44"/>
    </reaction>
</comment>
<comment type="similarity">
    <text evidence="1">Belongs to the CheD family.</text>
</comment>
<gene>
    <name evidence="1" type="primary">cheD2</name>
    <name type="ordered locus">GSU1144</name>
</gene>
<protein>
    <recommendedName>
        <fullName evidence="1">Probable chemoreceptor glutamine deamidase CheD 2</fullName>
        <ecNumber evidence="1">3.5.1.44</ecNumber>
    </recommendedName>
</protein>
<evidence type="ECO:0000255" key="1">
    <source>
        <dbReference type="HAMAP-Rule" id="MF_01440"/>
    </source>
</evidence>
<proteinExistence type="inferred from homology"/>
<organism>
    <name type="scientific">Geobacter sulfurreducens (strain ATCC 51573 / DSM 12127 / PCA)</name>
    <dbReference type="NCBI Taxonomy" id="243231"/>
    <lineage>
        <taxon>Bacteria</taxon>
        <taxon>Pseudomonadati</taxon>
        <taxon>Thermodesulfobacteriota</taxon>
        <taxon>Desulfuromonadia</taxon>
        <taxon>Geobacterales</taxon>
        <taxon>Geobacteraceae</taxon>
        <taxon>Geobacter</taxon>
    </lineage>
</organism>
<dbReference type="EC" id="3.5.1.44" evidence="1"/>
<dbReference type="EMBL" id="AE017180">
    <property type="protein sequence ID" value="AAR34520.2"/>
    <property type="molecule type" value="Genomic_DNA"/>
</dbReference>
<dbReference type="RefSeq" id="NP_952197.2">
    <property type="nucleotide sequence ID" value="NC_002939.5"/>
</dbReference>
<dbReference type="RefSeq" id="WP_010941805.1">
    <property type="nucleotide sequence ID" value="NC_002939.5"/>
</dbReference>
<dbReference type="SMR" id="Q74E20"/>
<dbReference type="STRING" id="243231.GSU1144"/>
<dbReference type="EnsemblBacteria" id="AAR34520">
    <property type="protein sequence ID" value="AAR34520"/>
    <property type="gene ID" value="GSU1144"/>
</dbReference>
<dbReference type="KEGG" id="gsu:GSU1144"/>
<dbReference type="PATRIC" id="fig|243231.5.peg.1140"/>
<dbReference type="eggNOG" id="COG1871">
    <property type="taxonomic scope" value="Bacteria"/>
</dbReference>
<dbReference type="HOGENOM" id="CLU_087854_1_0_7"/>
<dbReference type="InParanoid" id="Q74E20"/>
<dbReference type="OrthoDB" id="9807202at2"/>
<dbReference type="Proteomes" id="UP000000577">
    <property type="component" value="Chromosome"/>
</dbReference>
<dbReference type="GO" id="GO:0050568">
    <property type="term" value="F:protein-glutamine glutaminase activity"/>
    <property type="evidence" value="ECO:0007669"/>
    <property type="project" value="UniProtKB-UniRule"/>
</dbReference>
<dbReference type="GO" id="GO:0006935">
    <property type="term" value="P:chemotaxis"/>
    <property type="evidence" value="ECO:0007669"/>
    <property type="project" value="UniProtKB-UniRule"/>
</dbReference>
<dbReference type="CDD" id="cd16352">
    <property type="entry name" value="CheD"/>
    <property type="match status" value="1"/>
</dbReference>
<dbReference type="Gene3D" id="3.30.1330.200">
    <property type="match status" value="1"/>
</dbReference>
<dbReference type="HAMAP" id="MF_01440">
    <property type="entry name" value="CheD"/>
    <property type="match status" value="1"/>
</dbReference>
<dbReference type="InterPro" id="IPR038592">
    <property type="entry name" value="CheD-like_sf"/>
</dbReference>
<dbReference type="InterPro" id="IPR005659">
    <property type="entry name" value="Chemorcpt_Glu_NH3ase_CheD"/>
</dbReference>
<dbReference type="InterPro" id="IPR011324">
    <property type="entry name" value="Cytotoxic_necrot_fac-like_cat"/>
</dbReference>
<dbReference type="PANTHER" id="PTHR35147">
    <property type="entry name" value="CHEMORECEPTOR GLUTAMINE DEAMIDASE CHED-RELATED"/>
    <property type="match status" value="1"/>
</dbReference>
<dbReference type="PANTHER" id="PTHR35147:SF1">
    <property type="entry name" value="CHEMORECEPTOR GLUTAMINE DEAMIDASE CHED-RELATED"/>
    <property type="match status" value="1"/>
</dbReference>
<dbReference type="Pfam" id="PF03975">
    <property type="entry name" value="CheD"/>
    <property type="match status" value="1"/>
</dbReference>
<dbReference type="SUPFAM" id="SSF64438">
    <property type="entry name" value="CNF1/YfiH-like putative cysteine hydrolases"/>
    <property type="match status" value="1"/>
</dbReference>
<keyword id="KW-0145">Chemotaxis</keyword>
<keyword id="KW-0378">Hydrolase</keyword>
<keyword id="KW-1185">Reference proteome</keyword>
<reference key="1">
    <citation type="journal article" date="2003" name="Science">
        <title>Genome of Geobacter sulfurreducens: metal reduction in subsurface environments.</title>
        <authorList>
            <person name="Methe B.A."/>
            <person name="Nelson K.E."/>
            <person name="Eisen J.A."/>
            <person name="Paulsen I.T."/>
            <person name="Nelson W.C."/>
            <person name="Heidelberg J.F."/>
            <person name="Wu D."/>
            <person name="Wu M."/>
            <person name="Ward N.L."/>
            <person name="Beanan M.J."/>
            <person name="Dodson R.J."/>
            <person name="Madupu R."/>
            <person name="Brinkac L.M."/>
            <person name="Daugherty S.C."/>
            <person name="DeBoy R.T."/>
            <person name="Durkin A.S."/>
            <person name="Gwinn M.L."/>
            <person name="Kolonay J.F."/>
            <person name="Sullivan S.A."/>
            <person name="Haft D.H."/>
            <person name="Selengut J."/>
            <person name="Davidsen T.M."/>
            <person name="Zafar N."/>
            <person name="White O."/>
            <person name="Tran B."/>
            <person name="Romero C."/>
            <person name="Forberger H.A."/>
            <person name="Weidman J.F."/>
            <person name="Khouri H.M."/>
            <person name="Feldblyum T.V."/>
            <person name="Utterback T.R."/>
            <person name="Van Aken S.E."/>
            <person name="Lovley D.R."/>
            <person name="Fraser C.M."/>
        </authorList>
    </citation>
    <scope>NUCLEOTIDE SEQUENCE [LARGE SCALE GENOMIC DNA]</scope>
    <source>
        <strain>ATCC 51573 / DSM 12127 / PCA</strain>
    </source>
</reference>
<accession>Q74E20</accession>